<feature type="chain" id="PRO_0000450864" description="Dynein axonemal intermediate chain 3">
    <location>
        <begin position="1"/>
        <end position="923"/>
    </location>
</feature>
<feature type="repeat" description="WD 1" evidence="2">
    <location>
        <begin position="398"/>
        <end position="438"/>
    </location>
</feature>
<feature type="repeat" description="WD 2" evidence="2">
    <location>
        <begin position="480"/>
        <end position="536"/>
    </location>
</feature>
<feature type="repeat" description="WD 3" evidence="2">
    <location>
        <begin position="702"/>
        <end position="741"/>
    </location>
</feature>
<feature type="repeat" description="WD 4" evidence="2">
    <location>
        <begin position="745"/>
        <end position="785"/>
    </location>
</feature>
<feature type="region of interest" description="Disordered" evidence="3">
    <location>
        <begin position="1"/>
        <end position="35"/>
    </location>
</feature>
<feature type="coiled-coil region" evidence="2">
    <location>
        <begin position="869"/>
        <end position="889"/>
    </location>
</feature>
<feature type="compositionally biased region" description="Basic residues" evidence="3">
    <location>
        <begin position="10"/>
        <end position="19"/>
    </location>
</feature>
<organism>
    <name type="scientific">Mus musculus</name>
    <name type="common">Mouse</name>
    <dbReference type="NCBI Taxonomy" id="10090"/>
    <lineage>
        <taxon>Eukaryota</taxon>
        <taxon>Metazoa</taxon>
        <taxon>Chordata</taxon>
        <taxon>Craniata</taxon>
        <taxon>Vertebrata</taxon>
        <taxon>Euteleostomi</taxon>
        <taxon>Mammalia</taxon>
        <taxon>Eutheria</taxon>
        <taxon>Euarchontoglires</taxon>
        <taxon>Glires</taxon>
        <taxon>Rodentia</taxon>
        <taxon>Myomorpha</taxon>
        <taxon>Muroidea</taxon>
        <taxon>Muridae</taxon>
        <taxon>Murinae</taxon>
        <taxon>Mus</taxon>
        <taxon>Mus</taxon>
    </lineage>
</organism>
<sequence length="923" mass="105518">MAPKPPKSPKGQKKGKKNMKQQLLVPEEEEPMNMESMGHPEIYPLVLTTKTQEIFNCRVDEDMTDEQTYKLIKKEDILADLQNRAAVSDFHPVKKIVREYPGEELLLVYDKDFKYGLNFYLIGTEDGKENFLKPPEVPEEQEEPKEHVQEDVYVYNPPVSKPWVSLGSEKEIEEESVQESGKRVTYMISRKRSEFGAPVTFSDQNASSVKDAYIECTSYPEKNYTLSQVEKDVGLQVIAEVKDTSTQTKWAFPKNATTQYYPREFSEEEKSLIGKSKSLVDFFNNVSTSVEVALQQNEIMNTFIDDWKNLAEEESTFGDKTDTHLKEYQSFTDLHNTMEKMITCVSWHPTIFGLIVVSVAVRLSYEERVQNSGRLLLQPSLLLFWSFSDPIHPQLMLESPDDIFCFEFCPSDPNIIAGGCINGQIVLWDITAHADRIENIKTGGHRSKKTSLKPMFLLEPDSNKESMYIRHCAVSSIENGHRKVITDIHWLPDSFEINRMGSVFENRSGINCQLVTCSADCTICFWDIRPQKPAVTAAAAASAATTATNNANSQQSPVEKKKEENIDIPFDVPSTFLHLDLSWKPLSRLKLSKGDTSLDHCPTKLSLGEDPFLCKIQGTSSIHIILRDKMLSQIKMVKTSEINPYQNLEAGIANILKPIEDFCTKFFVGTEEGEVIYTDWKMERDSDTGRLMAKKPVSLYTVHDGAVHTIQRSPFFNDIVLTVGGWNVAIWKEEVMTGPLLQTCCGPKRYTAGHWSLTRPGVFYIGREDGNVDIWDLLEKTHEPAQSQNICITMITYIKPWTFSSKQQFIAVADYYGTLHILEIPWTLSHPSLNEVSSVNYYFEREVRHLEYVQQRKEIREQEKIDMALELVKKKAKIYQKTKEQMEAELKLEYESYLDLEKSVLFALGLSKVSEKKSYLDSH</sequence>
<proteinExistence type="evidence at protein level"/>
<comment type="function">
    <text evidence="1 4 6">Acts as a negative regulator of cell migration, invasion, and metastasis downstream of p53/TP53, through inhibition of Arp2/3 complex-mediated actin polymerization (By similarity). Via its association with the multisubunit axonemal dynein complex, is potentially involved in the regulation of cilia function (PubMed:30060180). May play a role in osteogenesis of dental tissue-derived mesenchymal stem cells (PubMed:25498833).</text>
</comment>
<comment type="subunit">
    <text evidence="1 6">Interacts with ACTR2; this interaction reduces binding of the Arp2/3 complex to the VCA domain of nucleation promoting factors (By similarity). Part of the multisubunit axonemal dynein complex formed at least of two heavy chains and a number of intermediate and light chains (PubMed:30060180). Found in a associated with the catalytic heavy chain DNAH2, the intermediate chain DNAI4, and the light chain DYNLT1 (PubMed:30060180).</text>
</comment>
<comment type="subcellular location">
    <subcellularLocation>
        <location evidence="1">Cytoplasm</location>
    </subcellularLocation>
</comment>
<comment type="tissue specificity">
    <text evidence="5">Strongly expressed in the testes (PubMed:26501274). Detected also in brain and lung tissues (PubMed:26501274).</text>
</comment>
<comment type="disruption phenotype">
    <text evidence="5">Deficient mice shown no overt abnormalities in body size, development, behavior, or fertility.</text>
</comment>
<accession>B2RY71</accession>
<name>DNAI3_MOUSE</name>
<protein>
    <recommendedName>
        <fullName evidence="7">Dynein axonemal intermediate chain 3</fullName>
    </recommendedName>
    <alternativeName>
        <fullName>WD repeat-containing protein 63</fullName>
    </alternativeName>
</protein>
<keyword id="KW-0175">Coiled coil</keyword>
<keyword id="KW-0963">Cytoplasm</keyword>
<keyword id="KW-1185">Reference proteome</keyword>
<keyword id="KW-0677">Repeat</keyword>
<keyword id="KW-0853">WD repeat</keyword>
<reference key="1">
    <citation type="journal article" date="2009" name="PLoS Biol.">
        <title>Lineage-specific biology revealed by a finished genome assembly of the mouse.</title>
        <authorList>
            <person name="Church D.M."/>
            <person name="Goodstadt L."/>
            <person name="Hillier L.W."/>
            <person name="Zody M.C."/>
            <person name="Goldstein S."/>
            <person name="She X."/>
            <person name="Bult C.J."/>
            <person name="Agarwala R."/>
            <person name="Cherry J.L."/>
            <person name="DiCuccio M."/>
            <person name="Hlavina W."/>
            <person name="Kapustin Y."/>
            <person name="Meric P."/>
            <person name="Maglott D."/>
            <person name="Birtle Z."/>
            <person name="Marques A.C."/>
            <person name="Graves T."/>
            <person name="Zhou S."/>
            <person name="Teague B."/>
            <person name="Potamousis K."/>
            <person name="Churas C."/>
            <person name="Place M."/>
            <person name="Herschleb J."/>
            <person name="Runnheim R."/>
            <person name="Forrest D."/>
            <person name="Amos-Landgraf J."/>
            <person name="Schwartz D.C."/>
            <person name="Cheng Z."/>
            <person name="Lindblad-Toh K."/>
            <person name="Eichler E.E."/>
            <person name="Ponting C.P."/>
        </authorList>
    </citation>
    <scope>NUCLEOTIDE SEQUENCE [LARGE SCALE GENOMIC DNA]</scope>
    <source>
        <strain>C57BL/6J</strain>
    </source>
</reference>
<reference key="2">
    <citation type="journal article" date="2004" name="Genome Res.">
        <title>The status, quality, and expansion of the NIH full-length cDNA project: the Mammalian Gene Collection (MGC).</title>
        <authorList>
            <consortium name="The MGC Project Team"/>
        </authorList>
    </citation>
    <scope>NUCLEOTIDE SEQUENCE [LARGE SCALE MRNA]</scope>
    <source>
        <tissue>Brain</tissue>
    </source>
</reference>
<reference key="3">
    <citation type="journal article" date="2015" name="J. Endod.">
        <title>Enriched trimethylation of lysine 4 of histone H3 of WDR63 enhanced osteogenic differentiation potentials of stem cells from apical papilla.</title>
        <authorList>
            <person name="Diao S."/>
            <person name="Yang D.M."/>
            <person name="Dong R."/>
            <person name="Wang L.P."/>
            <person name="Wang J.S."/>
            <person name="Du J."/>
            <person name="Wang S.L."/>
            <person name="Fan Z."/>
        </authorList>
    </citation>
    <scope>FUNCTION</scope>
</reference>
<reference key="4">
    <citation type="journal article" date="2015" name="Int. J. Mol. Sci.">
        <title>CRISPR/Cas9-mediated rapid generation of multiple mouse lines identified Ccdc63 as essential for spermiogenesis.</title>
        <authorList>
            <person name="Young S.A."/>
            <person name="Miyata H."/>
            <person name="Satouh Y."/>
            <person name="Kato H."/>
            <person name="Nozawa K."/>
            <person name="Isotani A."/>
            <person name="Aitken R.J."/>
            <person name="Baker M.A."/>
            <person name="Ikawa M."/>
        </authorList>
    </citation>
    <scope>DISRUPTION PHENOTYPE</scope>
    <scope>TISSUE SPECIFICITY</scope>
</reference>
<reference key="5">
    <citation type="journal article" date="2019" name="J. Mol. Cell Biol.">
        <title>Vertebrate Dynein-f depends on Wdr78 for axonemal localization and is essential for ciliary beat.</title>
        <authorList>
            <person name="Zhang Y."/>
            <person name="Chen Y."/>
            <person name="Zheng J."/>
            <person name="Wang J."/>
            <person name="Duan S."/>
            <person name="Zhang W."/>
            <person name="Yan X."/>
            <person name="Zhu X."/>
        </authorList>
    </citation>
    <scope>SUBUNIT</scope>
    <scope>FUNCTION</scope>
</reference>
<gene>
    <name type="primary">Dnai3</name>
    <name evidence="8" type="synonym">Wdr63</name>
</gene>
<evidence type="ECO:0000250" key="1">
    <source>
        <dbReference type="UniProtKB" id="Q8IWG1"/>
    </source>
</evidence>
<evidence type="ECO:0000255" key="2"/>
<evidence type="ECO:0000256" key="3">
    <source>
        <dbReference type="SAM" id="MobiDB-lite"/>
    </source>
</evidence>
<evidence type="ECO:0000269" key="4">
    <source>
    </source>
</evidence>
<evidence type="ECO:0000269" key="5">
    <source>
    </source>
</evidence>
<evidence type="ECO:0000269" key="6">
    <source>
    </source>
</evidence>
<evidence type="ECO:0000305" key="7"/>
<evidence type="ECO:0000312" key="8">
    <source>
        <dbReference type="MGI" id="MGI:3045269"/>
    </source>
</evidence>
<dbReference type="EMBL" id="AC161212">
    <property type="status" value="NOT_ANNOTATED_CDS"/>
    <property type="molecule type" value="Genomic_DNA"/>
</dbReference>
<dbReference type="EMBL" id="BC158119">
    <property type="protein sequence ID" value="AAI58120.1"/>
    <property type="molecule type" value="mRNA"/>
</dbReference>
<dbReference type="CCDS" id="CCDS17899.2"/>
<dbReference type="RefSeq" id="NP_766452.2">
    <property type="nucleotide sequence ID" value="NM_172864.3"/>
</dbReference>
<dbReference type="SMR" id="B2RY71"/>
<dbReference type="FunCoup" id="B2RY71">
    <property type="interactions" value="52"/>
</dbReference>
<dbReference type="STRING" id="10090.ENSMUSP00000124475"/>
<dbReference type="iPTMnet" id="B2RY71"/>
<dbReference type="PhosphoSitePlus" id="B2RY71"/>
<dbReference type="SwissPalm" id="B2RY71"/>
<dbReference type="PaxDb" id="10090-ENSMUSP00000124475"/>
<dbReference type="ProteomicsDB" id="341267"/>
<dbReference type="Antibodypedia" id="33558">
    <property type="antibodies" value="30 antibodies from 14 providers"/>
</dbReference>
<dbReference type="DNASU" id="242253"/>
<dbReference type="Ensembl" id="ENSMUST00000160285.2">
    <property type="protein sequence ID" value="ENSMUSP00000124475.2"/>
    <property type="gene ID" value="ENSMUSG00000043020.14"/>
</dbReference>
<dbReference type="GeneID" id="242253"/>
<dbReference type="KEGG" id="mmu:242253"/>
<dbReference type="UCSC" id="uc008rqw.2">
    <property type="organism name" value="mouse"/>
</dbReference>
<dbReference type="AGR" id="MGI:3045269"/>
<dbReference type="CTD" id="126820"/>
<dbReference type="MGI" id="MGI:3045269">
    <property type="gene designation" value="Dnai3"/>
</dbReference>
<dbReference type="VEuPathDB" id="HostDB:ENSMUSG00000043020"/>
<dbReference type="eggNOG" id="KOG1587">
    <property type="taxonomic scope" value="Eukaryota"/>
</dbReference>
<dbReference type="GeneTree" id="ENSGT00940000156924"/>
<dbReference type="HOGENOM" id="CLU_009390_1_0_1"/>
<dbReference type="InParanoid" id="B2RY71"/>
<dbReference type="OMA" id="EPMLTHH"/>
<dbReference type="OrthoDB" id="6619788at2759"/>
<dbReference type="PhylomeDB" id="B2RY71"/>
<dbReference type="TreeFam" id="TF326991"/>
<dbReference type="BioGRID-ORCS" id="242253">
    <property type="hits" value="2 hits in 76 CRISPR screens"/>
</dbReference>
<dbReference type="PRO" id="PR:B2RY71"/>
<dbReference type="Proteomes" id="UP000000589">
    <property type="component" value="Chromosome 3"/>
</dbReference>
<dbReference type="RNAct" id="B2RY71">
    <property type="molecule type" value="protein"/>
</dbReference>
<dbReference type="Bgee" id="ENSMUSG00000043020">
    <property type="expression patterns" value="Expressed in seminiferous tubule of testis and 68 other cell types or tissues"/>
</dbReference>
<dbReference type="GO" id="GO:0005858">
    <property type="term" value="C:axonemal dynein complex"/>
    <property type="evidence" value="ECO:0000314"/>
    <property type="project" value="UniProtKB"/>
</dbReference>
<dbReference type="GO" id="GO:0005737">
    <property type="term" value="C:cytoplasm"/>
    <property type="evidence" value="ECO:0000250"/>
    <property type="project" value="UniProtKB"/>
</dbReference>
<dbReference type="GO" id="GO:0071933">
    <property type="term" value="F:Arp2/3 complex binding"/>
    <property type="evidence" value="ECO:0000250"/>
    <property type="project" value="UniProtKB"/>
</dbReference>
<dbReference type="GO" id="GO:0034316">
    <property type="term" value="P:negative regulation of Arp2/3 complex-mediated actin nucleation"/>
    <property type="evidence" value="ECO:0000250"/>
    <property type="project" value="UniProtKB"/>
</dbReference>
<dbReference type="GO" id="GO:0030336">
    <property type="term" value="P:negative regulation of cell migration"/>
    <property type="evidence" value="ECO:0000250"/>
    <property type="project" value="UniProtKB"/>
</dbReference>
<dbReference type="GO" id="GO:0045669">
    <property type="term" value="P:positive regulation of osteoblast differentiation"/>
    <property type="evidence" value="ECO:0000314"/>
    <property type="project" value="UniProtKB"/>
</dbReference>
<dbReference type="FunFam" id="2.130.10.10:FF:000415">
    <property type="entry name" value="WD repeat domain 63"/>
    <property type="match status" value="1"/>
</dbReference>
<dbReference type="Gene3D" id="2.130.10.10">
    <property type="entry name" value="YVTN repeat-like/Quinoprotein amine dehydrogenase"/>
    <property type="match status" value="2"/>
</dbReference>
<dbReference type="InterPro" id="IPR050687">
    <property type="entry name" value="Dynein_IC"/>
</dbReference>
<dbReference type="InterPro" id="IPR015943">
    <property type="entry name" value="WD40/YVTN_repeat-like_dom_sf"/>
</dbReference>
<dbReference type="InterPro" id="IPR036322">
    <property type="entry name" value="WD40_repeat_dom_sf"/>
</dbReference>
<dbReference type="InterPro" id="IPR001680">
    <property type="entry name" value="WD40_rpt"/>
</dbReference>
<dbReference type="PANTHER" id="PTHR12442:SF5">
    <property type="entry name" value="DYNEIN AXONEMAL INTERMEDIATE CHAIN 3"/>
    <property type="match status" value="1"/>
</dbReference>
<dbReference type="PANTHER" id="PTHR12442">
    <property type="entry name" value="DYNEIN INTERMEDIATE CHAIN"/>
    <property type="match status" value="1"/>
</dbReference>
<dbReference type="SMART" id="SM00320">
    <property type="entry name" value="WD40"/>
    <property type="match status" value="4"/>
</dbReference>
<dbReference type="SUPFAM" id="SSF50978">
    <property type="entry name" value="WD40 repeat-like"/>
    <property type="match status" value="1"/>
</dbReference>
<dbReference type="PROSITE" id="PS00678">
    <property type="entry name" value="WD_REPEATS_1"/>
    <property type="match status" value="2"/>
</dbReference>